<dbReference type="EC" id="1.15.1.1"/>
<dbReference type="EMBL" id="U47887">
    <property type="protein sequence ID" value="AAB50299.1"/>
    <property type="molecule type" value="Genomic_DNA"/>
</dbReference>
<dbReference type="SMR" id="Q95081"/>
<dbReference type="GO" id="GO:0005737">
    <property type="term" value="C:cytoplasm"/>
    <property type="evidence" value="ECO:0007669"/>
    <property type="project" value="UniProtKB-SubCell"/>
</dbReference>
<dbReference type="GO" id="GO:0005507">
    <property type="term" value="F:copper ion binding"/>
    <property type="evidence" value="ECO:0007669"/>
    <property type="project" value="InterPro"/>
</dbReference>
<dbReference type="GO" id="GO:0004784">
    <property type="term" value="F:superoxide dismutase activity"/>
    <property type="evidence" value="ECO:0007669"/>
    <property type="project" value="UniProtKB-EC"/>
</dbReference>
<dbReference type="CDD" id="cd00305">
    <property type="entry name" value="Cu-Zn_Superoxide_Dismutase"/>
    <property type="match status" value="1"/>
</dbReference>
<dbReference type="Gene3D" id="2.60.40.200">
    <property type="entry name" value="Superoxide dismutase, copper/zinc binding domain"/>
    <property type="match status" value="1"/>
</dbReference>
<dbReference type="InterPro" id="IPR036423">
    <property type="entry name" value="SOD-like_Cu/Zn_dom_sf"/>
</dbReference>
<dbReference type="InterPro" id="IPR024134">
    <property type="entry name" value="SOD_Cu/Zn_/chaperone"/>
</dbReference>
<dbReference type="InterPro" id="IPR018152">
    <property type="entry name" value="SOD_Cu/Zn_BS"/>
</dbReference>
<dbReference type="InterPro" id="IPR001424">
    <property type="entry name" value="SOD_Cu_Zn_dom"/>
</dbReference>
<dbReference type="PANTHER" id="PTHR10003">
    <property type="entry name" value="SUPEROXIDE DISMUTASE CU-ZN -RELATED"/>
    <property type="match status" value="1"/>
</dbReference>
<dbReference type="Pfam" id="PF00080">
    <property type="entry name" value="Sod_Cu"/>
    <property type="match status" value="1"/>
</dbReference>
<dbReference type="PRINTS" id="PR00068">
    <property type="entry name" value="CUZNDISMTASE"/>
</dbReference>
<dbReference type="SUPFAM" id="SSF49329">
    <property type="entry name" value="Cu,Zn superoxide dismutase-like"/>
    <property type="match status" value="1"/>
</dbReference>
<dbReference type="PROSITE" id="PS00087">
    <property type="entry name" value="SOD_CU_ZN_1"/>
    <property type="match status" value="1"/>
</dbReference>
<reference key="1">
    <citation type="journal article" date="1997" name="Mol. Phylogenet. Evol.">
        <title>Evolution of the Drosophila obscura species group inferred from the Gpdh and Sod genes.</title>
        <authorList>
            <person name="Barrio E."/>
            <person name="Ayala F.J."/>
        </authorList>
    </citation>
    <scope>NUCLEOTIDE SEQUENCE [GENOMIC DNA]</scope>
</reference>
<evidence type="ECO:0000250" key="1"/>
<evidence type="ECO:0000250" key="2">
    <source>
        <dbReference type="UniProtKB" id="P61851"/>
    </source>
</evidence>
<evidence type="ECO:0000256" key="3">
    <source>
        <dbReference type="SAM" id="MobiDB-lite"/>
    </source>
</evidence>
<evidence type="ECO:0000305" key="4"/>
<proteinExistence type="inferred from homology"/>
<organism>
    <name type="scientific">Drosophila madeirensis</name>
    <name type="common">Fruit fly</name>
    <dbReference type="NCBI Taxonomy" id="30013"/>
    <lineage>
        <taxon>Eukaryota</taxon>
        <taxon>Metazoa</taxon>
        <taxon>Ecdysozoa</taxon>
        <taxon>Arthropoda</taxon>
        <taxon>Hexapoda</taxon>
        <taxon>Insecta</taxon>
        <taxon>Pterygota</taxon>
        <taxon>Neoptera</taxon>
        <taxon>Endopterygota</taxon>
        <taxon>Diptera</taxon>
        <taxon>Brachycera</taxon>
        <taxon>Muscomorpha</taxon>
        <taxon>Ephydroidea</taxon>
        <taxon>Drosophilidae</taxon>
        <taxon>Drosophila</taxon>
        <taxon>Sophophora</taxon>
    </lineage>
</organism>
<sequence>INGDAKGIVFFEQETSEAPVKVTGEVLGLAKGLHGFHVHEFGDNTNGCMSSGPHYNPRNKEHGAPTDENRHLGDLGNIQAAGDSPTAVSITDSKITLFGADSIIGRTVVVHADA</sequence>
<accession>Q95081</accession>
<name>SODC_DROMD</name>
<protein>
    <recommendedName>
        <fullName evidence="2">Superoxide dismutase [Cu-Zn]</fullName>
        <ecNumber>1.15.1.1</ecNumber>
    </recommendedName>
    <alternativeName>
        <fullName evidence="2">Superoxide dismutase 1</fullName>
    </alternativeName>
</protein>
<comment type="function">
    <text>Destroys radicals which are normally produced within the cells and which are toxic to biological systems.</text>
</comment>
<comment type="catalytic activity">
    <reaction>
        <text>2 superoxide + 2 H(+) = H2O2 + O2</text>
        <dbReference type="Rhea" id="RHEA:20696"/>
        <dbReference type="ChEBI" id="CHEBI:15378"/>
        <dbReference type="ChEBI" id="CHEBI:15379"/>
        <dbReference type="ChEBI" id="CHEBI:16240"/>
        <dbReference type="ChEBI" id="CHEBI:18421"/>
        <dbReference type="EC" id="1.15.1.1"/>
    </reaction>
</comment>
<comment type="cofactor">
    <cofactor evidence="1">
        <name>Cu cation</name>
        <dbReference type="ChEBI" id="CHEBI:23378"/>
    </cofactor>
    <text evidence="1">Binds 1 copper ion per subunit.</text>
</comment>
<comment type="cofactor">
    <cofactor evidence="1">
        <name>Zn(2+)</name>
        <dbReference type="ChEBI" id="CHEBI:29105"/>
    </cofactor>
    <text evidence="1">Binds 1 zinc ion per subunit.</text>
</comment>
<comment type="subunit">
    <text evidence="1">Homodimer.</text>
</comment>
<comment type="subcellular location">
    <subcellularLocation>
        <location>Cytoplasm</location>
    </subcellularLocation>
</comment>
<comment type="similarity">
    <text evidence="4">Belongs to the Cu-Zn superoxide dismutase family.</text>
</comment>
<keyword id="KW-0049">Antioxidant</keyword>
<keyword id="KW-0186">Copper</keyword>
<keyword id="KW-0963">Cytoplasm</keyword>
<keyword id="KW-0479">Metal-binding</keyword>
<keyword id="KW-0560">Oxidoreductase</keyword>
<keyword id="KW-0862">Zinc</keyword>
<gene>
    <name evidence="2" type="primary">Sod1</name>
    <name evidence="2" type="synonym">Sod</name>
</gene>
<feature type="chain" id="PRO_0000164087" description="Superoxide dismutase [Cu-Zn]">
    <location>
        <begin position="1" status="less than"/>
        <end position="114" status="greater than"/>
    </location>
</feature>
<feature type="region of interest" description="Disordered" evidence="3">
    <location>
        <begin position="49"/>
        <end position="73"/>
    </location>
</feature>
<feature type="compositionally biased region" description="Basic and acidic residues" evidence="3">
    <location>
        <begin position="58"/>
        <end position="73"/>
    </location>
</feature>
<feature type="binding site" evidence="1">
    <location>
        <position position="37"/>
    </location>
    <ligand>
        <name>Cu cation</name>
        <dbReference type="ChEBI" id="CHEBI:23378"/>
        <note>catalytic</note>
    </ligand>
</feature>
<feature type="binding site" evidence="1">
    <location>
        <position position="39"/>
    </location>
    <ligand>
        <name>Cu cation</name>
        <dbReference type="ChEBI" id="CHEBI:23378"/>
        <note>catalytic</note>
    </ligand>
</feature>
<feature type="binding site" evidence="1">
    <location>
        <position position="54"/>
    </location>
    <ligand>
        <name>Cu cation</name>
        <dbReference type="ChEBI" id="CHEBI:23378"/>
        <note>catalytic</note>
    </ligand>
</feature>
<feature type="binding site" evidence="1">
    <location>
        <position position="54"/>
    </location>
    <ligand>
        <name>Zn(2+)</name>
        <dbReference type="ChEBI" id="CHEBI:29105"/>
        <note>structural</note>
    </ligand>
</feature>
<feature type="binding site" evidence="1">
    <location>
        <position position="62"/>
    </location>
    <ligand>
        <name>Zn(2+)</name>
        <dbReference type="ChEBI" id="CHEBI:29105"/>
        <note>structural</note>
    </ligand>
</feature>
<feature type="binding site" evidence="1">
    <location>
        <position position="71"/>
    </location>
    <ligand>
        <name>Zn(2+)</name>
        <dbReference type="ChEBI" id="CHEBI:29105"/>
        <note>structural</note>
    </ligand>
</feature>
<feature type="binding site" evidence="1">
    <location>
        <position position="74"/>
    </location>
    <ligand>
        <name>Zn(2+)</name>
        <dbReference type="ChEBI" id="CHEBI:29105"/>
        <note>structural</note>
    </ligand>
</feature>
<feature type="binding site" evidence="1">
    <location>
        <position position="111"/>
    </location>
    <ligand>
        <name>Cu cation</name>
        <dbReference type="ChEBI" id="CHEBI:23378"/>
        <note>catalytic</note>
    </ligand>
</feature>
<feature type="non-terminal residue">
    <location>
        <position position="1"/>
    </location>
</feature>
<feature type="non-terminal residue">
    <location>
        <position position="114"/>
    </location>
</feature>